<proteinExistence type="inferred from homology"/>
<feature type="chain" id="PRO_1000020270" description="1-deoxy-D-xylulose 5-phosphate reductoisomerase">
    <location>
        <begin position="1"/>
        <end position="368"/>
    </location>
</feature>
<feature type="binding site" evidence="1">
    <location>
        <position position="7"/>
    </location>
    <ligand>
        <name>NADPH</name>
        <dbReference type="ChEBI" id="CHEBI:57783"/>
    </ligand>
</feature>
<feature type="binding site" evidence="1">
    <location>
        <position position="8"/>
    </location>
    <ligand>
        <name>NADPH</name>
        <dbReference type="ChEBI" id="CHEBI:57783"/>
    </ligand>
</feature>
<feature type="binding site" evidence="1">
    <location>
        <position position="9"/>
    </location>
    <ligand>
        <name>NADPH</name>
        <dbReference type="ChEBI" id="CHEBI:57783"/>
    </ligand>
</feature>
<feature type="binding site" evidence="1">
    <location>
        <position position="10"/>
    </location>
    <ligand>
        <name>NADPH</name>
        <dbReference type="ChEBI" id="CHEBI:57783"/>
    </ligand>
</feature>
<feature type="binding site" evidence="1">
    <location>
        <position position="31"/>
    </location>
    <ligand>
        <name>NADPH</name>
        <dbReference type="ChEBI" id="CHEBI:57783"/>
    </ligand>
</feature>
<feature type="binding site" evidence="1">
    <location>
        <position position="32"/>
    </location>
    <ligand>
        <name>NADPH</name>
        <dbReference type="ChEBI" id="CHEBI:57783"/>
    </ligand>
</feature>
<feature type="binding site" evidence="1">
    <location>
        <position position="33"/>
    </location>
    <ligand>
        <name>NADPH</name>
        <dbReference type="ChEBI" id="CHEBI:57783"/>
    </ligand>
</feature>
<feature type="binding site" evidence="1">
    <location>
        <position position="113"/>
    </location>
    <ligand>
        <name>NADPH</name>
        <dbReference type="ChEBI" id="CHEBI:57783"/>
    </ligand>
</feature>
<feature type="binding site" evidence="1">
    <location>
        <position position="114"/>
    </location>
    <ligand>
        <name>1-deoxy-D-xylulose 5-phosphate</name>
        <dbReference type="ChEBI" id="CHEBI:57792"/>
    </ligand>
</feature>
<feature type="binding site" evidence="1">
    <location>
        <position position="115"/>
    </location>
    <ligand>
        <name>NADPH</name>
        <dbReference type="ChEBI" id="CHEBI:57783"/>
    </ligand>
</feature>
<feature type="binding site" evidence="1">
    <location>
        <position position="133"/>
    </location>
    <ligand>
        <name>Mn(2+)</name>
        <dbReference type="ChEBI" id="CHEBI:29035"/>
    </ligand>
</feature>
<feature type="binding site" evidence="1">
    <location>
        <position position="134"/>
    </location>
    <ligand>
        <name>1-deoxy-D-xylulose 5-phosphate</name>
        <dbReference type="ChEBI" id="CHEBI:57792"/>
    </ligand>
</feature>
<feature type="binding site" evidence="1">
    <location>
        <position position="135"/>
    </location>
    <ligand>
        <name>1-deoxy-D-xylulose 5-phosphate</name>
        <dbReference type="ChEBI" id="CHEBI:57792"/>
    </ligand>
</feature>
<feature type="binding site" evidence="1">
    <location>
        <position position="135"/>
    </location>
    <ligand>
        <name>Mn(2+)</name>
        <dbReference type="ChEBI" id="CHEBI:29035"/>
    </ligand>
</feature>
<feature type="binding site" evidence="1">
    <location>
        <position position="158"/>
    </location>
    <ligand>
        <name>1-deoxy-D-xylulose 5-phosphate</name>
        <dbReference type="ChEBI" id="CHEBI:57792"/>
    </ligand>
</feature>
<feature type="binding site" evidence="1">
    <location>
        <position position="181"/>
    </location>
    <ligand>
        <name>1-deoxy-D-xylulose 5-phosphate</name>
        <dbReference type="ChEBI" id="CHEBI:57792"/>
    </ligand>
</feature>
<feature type="binding site" evidence="1">
    <location>
        <position position="187"/>
    </location>
    <ligand>
        <name>NADPH</name>
        <dbReference type="ChEBI" id="CHEBI:57783"/>
    </ligand>
</feature>
<feature type="binding site" evidence="1">
    <location>
        <position position="194"/>
    </location>
    <ligand>
        <name>1-deoxy-D-xylulose 5-phosphate</name>
        <dbReference type="ChEBI" id="CHEBI:57792"/>
    </ligand>
</feature>
<feature type="binding site" evidence="1">
    <location>
        <position position="199"/>
    </location>
    <ligand>
        <name>1-deoxy-D-xylulose 5-phosphate</name>
        <dbReference type="ChEBI" id="CHEBI:57792"/>
    </ligand>
</feature>
<feature type="binding site" evidence="1">
    <location>
        <position position="200"/>
    </location>
    <ligand>
        <name>1-deoxy-D-xylulose 5-phosphate</name>
        <dbReference type="ChEBI" id="CHEBI:57792"/>
    </ligand>
</feature>
<feature type="binding site" evidence="1">
    <location>
        <position position="203"/>
    </location>
    <ligand>
        <name>1-deoxy-D-xylulose 5-phosphate</name>
        <dbReference type="ChEBI" id="CHEBI:57792"/>
    </ligand>
</feature>
<feature type="binding site" evidence="1">
    <location>
        <position position="203"/>
    </location>
    <ligand>
        <name>Mn(2+)</name>
        <dbReference type="ChEBI" id="CHEBI:29035"/>
    </ligand>
</feature>
<comment type="function">
    <text evidence="1">Catalyzes the NADPH-dependent rearrangement and reduction of 1-deoxy-D-xylulose-5-phosphate (DXP) to 2-C-methyl-D-erythritol 4-phosphate (MEP).</text>
</comment>
<comment type="catalytic activity">
    <reaction evidence="1">
        <text>2-C-methyl-D-erythritol 4-phosphate + NADP(+) = 1-deoxy-D-xylulose 5-phosphate + NADPH + H(+)</text>
        <dbReference type="Rhea" id="RHEA:13717"/>
        <dbReference type="ChEBI" id="CHEBI:15378"/>
        <dbReference type="ChEBI" id="CHEBI:57783"/>
        <dbReference type="ChEBI" id="CHEBI:57792"/>
        <dbReference type="ChEBI" id="CHEBI:58262"/>
        <dbReference type="ChEBI" id="CHEBI:58349"/>
        <dbReference type="EC" id="1.1.1.267"/>
    </reaction>
    <physiologicalReaction direction="right-to-left" evidence="1">
        <dbReference type="Rhea" id="RHEA:13719"/>
    </physiologicalReaction>
</comment>
<comment type="cofactor">
    <cofactor evidence="1">
        <name>Mg(2+)</name>
        <dbReference type="ChEBI" id="CHEBI:18420"/>
    </cofactor>
    <cofactor evidence="1">
        <name>Mn(2+)</name>
        <dbReference type="ChEBI" id="CHEBI:29035"/>
    </cofactor>
</comment>
<comment type="pathway">
    <text evidence="1">Isoprenoid biosynthesis; isopentenyl diphosphate biosynthesis via DXP pathway; isopentenyl diphosphate from 1-deoxy-D-xylulose 5-phosphate: step 1/6.</text>
</comment>
<comment type="similarity">
    <text evidence="1">Belongs to the DXR family.</text>
</comment>
<sequence>MVVLGSTGSIGKNALKIAKKFGVEIEALSCGKNIALINEQIKVFKPKKVAILDPSDLNNLEPLGAEVFVGLDGIDAMIEECVSNLVLNAIVGVAGLKASFKSLQRNKKLALANKESLVSAGNLLDISQITPVDSEHFGLWALLQNKTLKPKSLIISASGGAFRDTPLELIAIQNAQNALKHPNWSMGSKITIDSASMVNKLFEILETYWLFGTSLKIDALIERSSIVHALVEFEDNSIIVHLASADMQLPISYAIDPKLASLNASIKPLDLYALNAIKFEPISMERYTLWRYKDLLLENPKLGVVLNASNEVAMEKFLNQEIAFGGLIQTISQALELYAKKSFKLSSLDEVLELDKEVRERFENVAGV</sequence>
<keyword id="KW-0414">Isoprene biosynthesis</keyword>
<keyword id="KW-0464">Manganese</keyword>
<keyword id="KW-0479">Metal-binding</keyword>
<keyword id="KW-0521">NADP</keyword>
<keyword id="KW-0560">Oxidoreductase</keyword>
<dbReference type="EC" id="1.1.1.267" evidence="1"/>
<dbReference type="EMBL" id="CP000241">
    <property type="protein sequence ID" value="ABF84284.1"/>
    <property type="molecule type" value="Genomic_DNA"/>
</dbReference>
<dbReference type="RefSeq" id="WP_000260746.1">
    <property type="nucleotide sequence ID" value="NC_008086.1"/>
</dbReference>
<dbReference type="SMR" id="Q1CUT8"/>
<dbReference type="KEGG" id="hpa:HPAG1_0217"/>
<dbReference type="HOGENOM" id="CLU_035714_4_0_7"/>
<dbReference type="UniPathway" id="UPA00056">
    <property type="reaction ID" value="UER00092"/>
</dbReference>
<dbReference type="GO" id="GO:0030604">
    <property type="term" value="F:1-deoxy-D-xylulose-5-phosphate reductoisomerase activity"/>
    <property type="evidence" value="ECO:0007669"/>
    <property type="project" value="UniProtKB-UniRule"/>
</dbReference>
<dbReference type="GO" id="GO:0030145">
    <property type="term" value="F:manganese ion binding"/>
    <property type="evidence" value="ECO:0007669"/>
    <property type="project" value="TreeGrafter"/>
</dbReference>
<dbReference type="GO" id="GO:0070402">
    <property type="term" value="F:NADPH binding"/>
    <property type="evidence" value="ECO:0007669"/>
    <property type="project" value="InterPro"/>
</dbReference>
<dbReference type="GO" id="GO:0051484">
    <property type="term" value="P:isopentenyl diphosphate biosynthetic process, methylerythritol 4-phosphate pathway involved in terpenoid biosynthetic process"/>
    <property type="evidence" value="ECO:0007669"/>
    <property type="project" value="TreeGrafter"/>
</dbReference>
<dbReference type="FunFam" id="3.40.50.720:FF:000771">
    <property type="entry name" value="1-deoxy-D-xylulose 5-phosphate reductoisomerase"/>
    <property type="match status" value="1"/>
</dbReference>
<dbReference type="Gene3D" id="1.10.1740.10">
    <property type="match status" value="1"/>
</dbReference>
<dbReference type="Gene3D" id="3.40.50.720">
    <property type="entry name" value="NAD(P)-binding Rossmann-like Domain"/>
    <property type="match status" value="1"/>
</dbReference>
<dbReference type="HAMAP" id="MF_00183">
    <property type="entry name" value="DXP_reductoisom"/>
    <property type="match status" value="1"/>
</dbReference>
<dbReference type="InterPro" id="IPR003821">
    <property type="entry name" value="DXP_reductoisomerase"/>
</dbReference>
<dbReference type="InterPro" id="IPR013644">
    <property type="entry name" value="DXP_reductoisomerase_C"/>
</dbReference>
<dbReference type="InterPro" id="IPR013512">
    <property type="entry name" value="DXP_reductoisomerase_N"/>
</dbReference>
<dbReference type="InterPro" id="IPR026877">
    <property type="entry name" value="DXPR_C"/>
</dbReference>
<dbReference type="InterPro" id="IPR036169">
    <property type="entry name" value="DXPR_C_sf"/>
</dbReference>
<dbReference type="InterPro" id="IPR036291">
    <property type="entry name" value="NAD(P)-bd_dom_sf"/>
</dbReference>
<dbReference type="NCBIfam" id="TIGR00243">
    <property type="entry name" value="Dxr"/>
    <property type="match status" value="1"/>
</dbReference>
<dbReference type="PANTHER" id="PTHR30525">
    <property type="entry name" value="1-DEOXY-D-XYLULOSE 5-PHOSPHATE REDUCTOISOMERASE"/>
    <property type="match status" value="1"/>
</dbReference>
<dbReference type="PANTHER" id="PTHR30525:SF0">
    <property type="entry name" value="1-DEOXY-D-XYLULOSE 5-PHOSPHATE REDUCTOISOMERASE, CHLOROPLASTIC"/>
    <property type="match status" value="1"/>
</dbReference>
<dbReference type="Pfam" id="PF08436">
    <property type="entry name" value="DXP_redisom_C"/>
    <property type="match status" value="1"/>
</dbReference>
<dbReference type="Pfam" id="PF02670">
    <property type="entry name" value="DXP_reductoisom"/>
    <property type="match status" value="1"/>
</dbReference>
<dbReference type="Pfam" id="PF13288">
    <property type="entry name" value="DXPR_C"/>
    <property type="match status" value="1"/>
</dbReference>
<dbReference type="PIRSF" id="PIRSF006205">
    <property type="entry name" value="Dxp_reductismrs"/>
    <property type="match status" value="1"/>
</dbReference>
<dbReference type="SUPFAM" id="SSF69055">
    <property type="entry name" value="1-deoxy-D-xylulose-5-phosphate reductoisomerase, C-terminal domain"/>
    <property type="match status" value="1"/>
</dbReference>
<dbReference type="SUPFAM" id="SSF55347">
    <property type="entry name" value="Glyceraldehyde-3-phosphate dehydrogenase-like, C-terminal domain"/>
    <property type="match status" value="1"/>
</dbReference>
<dbReference type="SUPFAM" id="SSF51735">
    <property type="entry name" value="NAD(P)-binding Rossmann-fold domains"/>
    <property type="match status" value="1"/>
</dbReference>
<accession>Q1CUT8</accession>
<evidence type="ECO:0000255" key="1">
    <source>
        <dbReference type="HAMAP-Rule" id="MF_00183"/>
    </source>
</evidence>
<protein>
    <recommendedName>
        <fullName evidence="1">1-deoxy-D-xylulose 5-phosphate reductoisomerase</fullName>
        <shortName evidence="1">DXP reductoisomerase</shortName>
        <ecNumber evidence="1">1.1.1.267</ecNumber>
    </recommendedName>
    <alternativeName>
        <fullName evidence="1">1-deoxyxylulose-5-phosphate reductoisomerase</fullName>
    </alternativeName>
    <alternativeName>
        <fullName evidence="1">2-C-methyl-D-erythritol 4-phosphate synthase</fullName>
    </alternativeName>
</protein>
<reference key="1">
    <citation type="journal article" date="2006" name="Proc. Natl. Acad. Sci. U.S.A.">
        <title>The complete genome sequence of a chronic atrophic gastritis Helicobacter pylori strain: evolution during disease progression.</title>
        <authorList>
            <person name="Oh J.D."/>
            <person name="Kling-Baeckhed H."/>
            <person name="Giannakis M."/>
            <person name="Xu J."/>
            <person name="Fulton R.S."/>
            <person name="Fulton L.A."/>
            <person name="Cordum H.S."/>
            <person name="Wang C."/>
            <person name="Elliott G."/>
            <person name="Edwards J."/>
            <person name="Mardis E.R."/>
            <person name="Engstrand L.G."/>
            <person name="Gordon J.I."/>
        </authorList>
    </citation>
    <scope>NUCLEOTIDE SEQUENCE [LARGE SCALE GENOMIC DNA]</scope>
    <source>
        <strain>HPAG1</strain>
    </source>
</reference>
<name>DXR_HELPH</name>
<organism>
    <name type="scientific">Helicobacter pylori (strain HPAG1)</name>
    <dbReference type="NCBI Taxonomy" id="357544"/>
    <lineage>
        <taxon>Bacteria</taxon>
        <taxon>Pseudomonadati</taxon>
        <taxon>Campylobacterota</taxon>
        <taxon>Epsilonproteobacteria</taxon>
        <taxon>Campylobacterales</taxon>
        <taxon>Helicobacteraceae</taxon>
        <taxon>Helicobacter</taxon>
    </lineage>
</organism>
<gene>
    <name evidence="1" type="primary">dxr</name>
    <name type="ordered locus">HPAG1_0217</name>
</gene>